<sequence length="1196" mass="131323">MESIGSHCCSSPFTFITRNSSSSLPRLVNITHRVNLSHQSHRLRNSNSRLTCTATSSSTIEEQRKKKDGSGTKVRLNVRLDHQVNFGDHVAMFGSAKEIGSWKKKSPLNWSENGWVCELELDGGQVLEYKFVIVKNDGSLSWESGDNRVLKVPNSGNFSVVCHWDATRETLDLPQEVGNDDDVGDGGHERDNHDVGDDRVVGSENGAQLQKSTLGGQWQGKDASFMRSNDHGNREVGRNWDTSGLEGTALKMVEGDRNSKNWWRKLEMVREVIVGSVEREERLKALIYSAIYLKWINTGQIPCFEDGGHHRPNRHAEISRLIFRELEHICSKKDATPEEVLVARKIHPCLPSFKAEFTAAVPLTRIRDIAHRNDIPHDLKQEIKHTIQNKLHRNAGPEDLIATEAMLQRITETPGKYSGDFVEQFKIFHNELKDFFNAGSLTEQLDSMKISMDDRGLSALNLFFECKKRLDTSGESSNVLELIKTMHSLASLRETIIKELNSGLRNDAPDTAIAMRQKWRLCEIGLEDYFFVLLSRFLNALETMGGADQLAKDVGSRNVASWNDPLDALVLGVHQVGLSGWKQEECLAIGNELLAWRERDLLEKEGEEDGKTIWAMRLKATLDRARRLTAEYSDLLLQIFPPNVEILGKALGIPENSVKTYTEAEIRAGIIFQISKLCTVLLKAVRNSLGSEGWDVVVPGSTSGTLVQVESIVPGSLPATSGGPIILLVNKADGDEEVSAANGNIAGVMLLQELPHLSHLGVRARQEKIVFVTCDDDDKVADIRRLVGKFVRLEASPSHVNLILSTEGRSRTSKSSATKKTDKNSLSKKKTDKKSLSIDDEESKPGSSSSNSLLYSSKDIPSGGIIALADADVPTSGSKSAACGLLASLAEASSKVHSEHGVPASFKVPTGVVIPFGSMELALKQNNSEEKFASLLEKLETARPEGGELDDICDQIHEVMKTLQVPKETINSISKAFLKDARLIVRSSANVEDLAGMSAAGLYESIPNVSPSDPLVFSDSVCQVWASLYTRRAVLSRRAAGVSQREASMAVLVQEMLSPDLSFVLHTVSPADPDSNLVEAEIAPGLGETLASGTRGTPWRLASGKLDGIVQTLAFANFSEELLVSGTGPADGKYVRLTVDYSKKRLTVDSVFRQQLGQRLGSVGFFLERNFGCAQDVEGCLVGEDVYIVQSRPQPL</sequence>
<gene>
    <name type="primary">GWD3</name>
    <name type="synonym">OK1</name>
    <name type="synonym">PWD</name>
    <name type="ordered locus">At5g26570</name>
    <name type="ORF">F9D12.1</name>
    <name type="ORF">F9D12.19</name>
</gene>
<keyword id="KW-0007">Acetylation</keyword>
<keyword id="KW-0025">Alternative splicing</keyword>
<keyword id="KW-0067">ATP-binding</keyword>
<keyword id="KW-0119">Carbohydrate metabolism</keyword>
<keyword id="KW-0150">Chloroplast</keyword>
<keyword id="KW-0418">Kinase</keyword>
<keyword id="KW-0460">Magnesium</keyword>
<keyword id="KW-0479">Metal-binding</keyword>
<keyword id="KW-0547">Nucleotide-binding</keyword>
<keyword id="KW-0934">Plastid</keyword>
<keyword id="KW-1185">Reference proteome</keyword>
<keyword id="KW-0808">Transferase</keyword>
<keyword id="KW-0809">Transit peptide</keyword>
<dbReference type="EC" id="2.7.9.5"/>
<dbReference type="EMBL" id="AY747068">
    <property type="protein sequence ID" value="AAU93516.1"/>
    <property type="molecule type" value="mRNA"/>
</dbReference>
<dbReference type="EMBL" id="AJ635427">
    <property type="protein sequence ID" value="CAG25776.1"/>
    <property type="molecule type" value="mRNA"/>
</dbReference>
<dbReference type="EMBL" id="AF077407">
    <property type="protein sequence ID" value="AAC26245.1"/>
    <property type="status" value="ALT_SEQ"/>
    <property type="molecule type" value="Genomic_DNA"/>
</dbReference>
<dbReference type="EMBL" id="AF077407">
    <property type="protein sequence ID" value="AAC26246.1"/>
    <property type="status" value="ALT_SEQ"/>
    <property type="molecule type" value="Genomic_DNA"/>
</dbReference>
<dbReference type="EMBL" id="CP002688">
    <property type="protein sequence ID" value="AED93555.1"/>
    <property type="molecule type" value="Genomic_DNA"/>
</dbReference>
<dbReference type="EMBL" id="BT005745">
    <property type="protein sequence ID" value="AAO64153.1"/>
    <property type="molecule type" value="mRNA"/>
</dbReference>
<dbReference type="PIR" id="T01856">
    <property type="entry name" value="T01856"/>
</dbReference>
<dbReference type="PIR" id="T01857">
    <property type="entry name" value="T01857"/>
</dbReference>
<dbReference type="RefSeq" id="NP_198009.3">
    <molecule id="Q6ZY51-1"/>
    <property type="nucleotide sequence ID" value="NM_122538.5"/>
</dbReference>
<dbReference type="SMR" id="Q6ZY51"/>
<dbReference type="BioGRID" id="17981">
    <property type="interactions" value="1"/>
</dbReference>
<dbReference type="FunCoup" id="Q6ZY51">
    <property type="interactions" value="562"/>
</dbReference>
<dbReference type="STRING" id="3702.Q6ZY51"/>
<dbReference type="CAZy" id="CBM20">
    <property type="family name" value="Carbohydrate-Binding Module Family 20"/>
</dbReference>
<dbReference type="iPTMnet" id="Q6ZY51"/>
<dbReference type="PaxDb" id="3702-AT5G26570.1"/>
<dbReference type="ProteomicsDB" id="226130">
    <molecule id="Q6ZY51-1"/>
</dbReference>
<dbReference type="EnsemblPlants" id="AT5G26570.1">
    <molecule id="Q6ZY51-1"/>
    <property type="protein sequence ID" value="AT5G26570.1"/>
    <property type="gene ID" value="AT5G26570"/>
</dbReference>
<dbReference type="GeneID" id="832706"/>
<dbReference type="Gramene" id="AT5G26570.1">
    <molecule id="Q6ZY51-1"/>
    <property type="protein sequence ID" value="AT5G26570.1"/>
    <property type="gene ID" value="AT5G26570"/>
</dbReference>
<dbReference type="KEGG" id="ath:AT5G26570"/>
<dbReference type="Araport" id="AT5G26570"/>
<dbReference type="TAIR" id="AT5G26570">
    <property type="gene designation" value="PWD"/>
</dbReference>
<dbReference type="eggNOG" id="ENOG502QS3J">
    <property type="taxonomic scope" value="Eukaryota"/>
</dbReference>
<dbReference type="HOGENOM" id="CLU_012115_0_0_1"/>
<dbReference type="InParanoid" id="Q6ZY51"/>
<dbReference type="OMA" id="VPMNWTE"/>
<dbReference type="PhylomeDB" id="Q6ZY51"/>
<dbReference type="BioCyc" id="ARA:AT5G26570-MONOMER"/>
<dbReference type="BioCyc" id="MetaCyc:AT5G26570-MONOMER"/>
<dbReference type="BRENDA" id="2.7.9.4">
    <property type="organism ID" value="399"/>
</dbReference>
<dbReference type="BRENDA" id="2.7.9.5">
    <property type="organism ID" value="399"/>
</dbReference>
<dbReference type="PRO" id="PR:Q6ZY51"/>
<dbReference type="Proteomes" id="UP000006548">
    <property type="component" value="Chromosome 5"/>
</dbReference>
<dbReference type="ExpressionAtlas" id="Q6ZY51">
    <property type="expression patterns" value="baseline and differential"/>
</dbReference>
<dbReference type="GO" id="GO:0009507">
    <property type="term" value="C:chloroplast"/>
    <property type="evidence" value="ECO:0000314"/>
    <property type="project" value="TAIR"/>
</dbReference>
<dbReference type="GO" id="GO:0009570">
    <property type="term" value="C:chloroplast stroma"/>
    <property type="evidence" value="ECO:0007005"/>
    <property type="project" value="TAIR"/>
</dbReference>
<dbReference type="GO" id="GO:0009536">
    <property type="term" value="C:plastid"/>
    <property type="evidence" value="ECO:0000314"/>
    <property type="project" value="TAIR"/>
</dbReference>
<dbReference type="GO" id="GO:0005524">
    <property type="term" value="F:ATP binding"/>
    <property type="evidence" value="ECO:0007669"/>
    <property type="project" value="UniProtKB-KW"/>
</dbReference>
<dbReference type="GO" id="GO:0019200">
    <property type="term" value="F:carbohydrate kinase activity"/>
    <property type="evidence" value="ECO:0000314"/>
    <property type="project" value="TAIR"/>
</dbReference>
<dbReference type="GO" id="GO:0046872">
    <property type="term" value="F:metal ion binding"/>
    <property type="evidence" value="ECO:0007669"/>
    <property type="project" value="UniProtKB-KW"/>
</dbReference>
<dbReference type="GO" id="GO:0051752">
    <property type="term" value="F:phosphoglucan, water dikinase activity"/>
    <property type="evidence" value="ECO:0000314"/>
    <property type="project" value="TAIR"/>
</dbReference>
<dbReference type="GO" id="GO:2001070">
    <property type="term" value="F:starch binding"/>
    <property type="evidence" value="ECO:0007669"/>
    <property type="project" value="InterPro"/>
</dbReference>
<dbReference type="GO" id="GO:0046777">
    <property type="term" value="P:protein autophosphorylation"/>
    <property type="evidence" value="ECO:0000314"/>
    <property type="project" value="TAIR"/>
</dbReference>
<dbReference type="GO" id="GO:0005983">
    <property type="term" value="P:starch catabolic process"/>
    <property type="evidence" value="ECO:0000304"/>
    <property type="project" value="TAIR"/>
</dbReference>
<dbReference type="GO" id="GO:0005982">
    <property type="term" value="P:starch metabolic process"/>
    <property type="evidence" value="ECO:0000315"/>
    <property type="project" value="TAIR"/>
</dbReference>
<dbReference type="CDD" id="cd05818">
    <property type="entry name" value="CBM20_water_dikinase"/>
    <property type="match status" value="1"/>
</dbReference>
<dbReference type="Gene3D" id="3.30.1490.20">
    <property type="entry name" value="ATP-grasp fold, A domain"/>
    <property type="match status" value="1"/>
</dbReference>
<dbReference type="Gene3D" id="3.30.470.20">
    <property type="entry name" value="ATP-grasp fold, B domain"/>
    <property type="match status" value="1"/>
</dbReference>
<dbReference type="Gene3D" id="2.60.40.10">
    <property type="entry name" value="Immunoglobulins"/>
    <property type="match status" value="1"/>
</dbReference>
<dbReference type="InterPro" id="IPR013815">
    <property type="entry name" value="ATP_grasp_subdomain_1"/>
</dbReference>
<dbReference type="InterPro" id="IPR013784">
    <property type="entry name" value="Carb-bd-like_fold"/>
</dbReference>
<dbReference type="InterPro" id="IPR002044">
    <property type="entry name" value="CBM20"/>
</dbReference>
<dbReference type="InterPro" id="IPR034848">
    <property type="entry name" value="CBM20_water_dikinase"/>
</dbReference>
<dbReference type="InterPro" id="IPR054481">
    <property type="entry name" value="GWD1_pHisD"/>
</dbReference>
<dbReference type="InterPro" id="IPR013783">
    <property type="entry name" value="Ig-like_fold"/>
</dbReference>
<dbReference type="InterPro" id="IPR002192">
    <property type="entry name" value="PPDK_AMP/ATP-bd"/>
</dbReference>
<dbReference type="PANTHER" id="PTHR47453">
    <property type="entry name" value="PHOSPHOGLUCAN, WATER DIKINASE, CHLOROPLASTIC"/>
    <property type="match status" value="1"/>
</dbReference>
<dbReference type="PANTHER" id="PTHR47453:SF1">
    <property type="entry name" value="PHOSPHOGLUCAN, WATER DIKINASE, CHLOROPLASTIC"/>
    <property type="match status" value="1"/>
</dbReference>
<dbReference type="Pfam" id="PF00686">
    <property type="entry name" value="CBM_20"/>
    <property type="match status" value="1"/>
</dbReference>
<dbReference type="Pfam" id="PF22973">
    <property type="entry name" value="GWD1_pHisD"/>
    <property type="match status" value="1"/>
</dbReference>
<dbReference type="Pfam" id="PF01326">
    <property type="entry name" value="PPDK_N"/>
    <property type="match status" value="1"/>
</dbReference>
<dbReference type="SMART" id="SM01065">
    <property type="entry name" value="CBM_2"/>
    <property type="match status" value="1"/>
</dbReference>
<dbReference type="SUPFAM" id="SSF56059">
    <property type="entry name" value="Glutathione synthetase ATP-binding domain-like"/>
    <property type="match status" value="1"/>
</dbReference>
<dbReference type="SUPFAM" id="SSF49452">
    <property type="entry name" value="Starch-binding domain-like"/>
    <property type="match status" value="1"/>
</dbReference>
<dbReference type="PROSITE" id="PS51166">
    <property type="entry name" value="CBM20"/>
    <property type="match status" value="1"/>
</dbReference>
<proteinExistence type="evidence at protein level"/>
<organism>
    <name type="scientific">Arabidopsis thaliana</name>
    <name type="common">Mouse-ear cress</name>
    <dbReference type="NCBI Taxonomy" id="3702"/>
    <lineage>
        <taxon>Eukaryota</taxon>
        <taxon>Viridiplantae</taxon>
        <taxon>Streptophyta</taxon>
        <taxon>Embryophyta</taxon>
        <taxon>Tracheophyta</taxon>
        <taxon>Spermatophyta</taxon>
        <taxon>Magnoliopsida</taxon>
        <taxon>eudicotyledons</taxon>
        <taxon>Gunneridae</taxon>
        <taxon>Pentapetalae</taxon>
        <taxon>rosids</taxon>
        <taxon>malvids</taxon>
        <taxon>Brassicales</taxon>
        <taxon>Brassicaceae</taxon>
        <taxon>Camelineae</taxon>
        <taxon>Arabidopsis</taxon>
    </lineage>
</organism>
<comment type="function">
    <text evidence="4 5">Mediates the incorporation of phosphate into starch-like phospho-alpha-glucan, mostly at the C-3 position of glucose units. Required for starch degradation, suggesting that the phosphate content of starch regulates its degradability.</text>
</comment>
<comment type="catalytic activity">
    <reaction evidence="4 5">
        <text>[(1-&gt;4)-6-phospho-alpha-D-glucosyl](n) + n ATP + n H2O = [(1-&gt;4)-3,6-bisphospho-alpha-D-glucosyl](n) + n AMP + n phosphate + 2n H(+)</text>
        <dbReference type="Rhea" id="RHEA:10256"/>
        <dbReference type="Rhea" id="RHEA-COMP:12983"/>
        <dbReference type="Rhea" id="RHEA-COMP:14598"/>
        <dbReference type="ChEBI" id="CHEBI:15377"/>
        <dbReference type="ChEBI" id="CHEBI:15378"/>
        <dbReference type="ChEBI" id="CHEBI:30616"/>
        <dbReference type="ChEBI" id="CHEBI:43474"/>
        <dbReference type="ChEBI" id="CHEBI:134068"/>
        <dbReference type="ChEBI" id="CHEBI:140561"/>
        <dbReference type="ChEBI" id="CHEBI:456215"/>
        <dbReference type="EC" id="2.7.9.5"/>
    </reaction>
</comment>
<comment type="cofactor">
    <cofactor evidence="1">
        <name>Mg(2+)</name>
        <dbReference type="ChEBI" id="CHEBI:18420"/>
    </cofactor>
</comment>
<comment type="subunit">
    <text evidence="1">Homodimer.</text>
</comment>
<comment type="subcellular location">
    <subcellularLocation>
        <location evidence="4 5">Plastid</location>
        <location evidence="4 5">Chloroplast</location>
    </subcellularLocation>
    <text>Starch granules during starch mobilization in darkness.</text>
</comment>
<comment type="alternative products">
    <event type="alternative splicing"/>
    <isoform>
        <id>Q6ZY51-1</id>
        <name>1</name>
        <sequence type="displayed"/>
    </isoform>
    <text>A number of isoforms are produced. According to EST sequences.</text>
</comment>
<comment type="tissue specificity">
    <text evidence="5">In all starch containing tissues (e.g. roots, leaves, stems, inflorescence and siliques).</text>
</comment>
<comment type="induction">
    <text evidence="5">Circadian regulation. Induced during light phase and repressed during dark phase.</text>
</comment>
<comment type="domain">
    <text evidence="1">The N-terminal domain contains the alpha-glucan binding site, the central domain the pyrophosphate/phosphate carrier histidine, and the C-terminal domain the ATP binding site.</text>
</comment>
<comment type="miscellaneous">
    <text evidence="1">The reaction takes place in three steps, mediated by a phosphocarrier histidine residue located on the surface of the central domain. The two first partial reactions are catalyzed at an active site located on the C-terminal domain, and the third partial reaction is catalyzed at an active site located on the N-terminal domain. For catalytic turnover, the central domain swivels from the concave surface of the C-terminal domain to that of the N-terminal domain (By similarity).</text>
</comment>
<comment type="similarity">
    <text evidence="6">Belongs to the PEP-utilizing enzyme family.</text>
</comment>
<comment type="sequence caution" evidence="6">
    <conflict type="erroneous gene model prediction">
        <sequence resource="EMBL-CDS" id="AAC26245"/>
    </conflict>
</comment>
<comment type="sequence caution" evidence="6">
    <conflict type="erroneous gene model prediction">
        <sequence resource="EMBL-CDS" id="AAC26246"/>
    </conflict>
</comment>
<feature type="transit peptide" description="Chloroplast" evidence="8">
    <location>
        <begin position="1"/>
        <end position="54"/>
    </location>
</feature>
<feature type="chain" id="PRO_0000240250" description="Phosphoglucan, water dikinase, chloroplastic">
    <location>
        <begin position="55"/>
        <end position="1196"/>
    </location>
</feature>
<feature type="domain" description="CBM20" evidence="2">
    <location>
        <begin position="66"/>
        <end position="166"/>
    </location>
</feature>
<feature type="region of interest" description="Disordered" evidence="3">
    <location>
        <begin position="174"/>
        <end position="200"/>
    </location>
</feature>
<feature type="region of interest" description="Disordered" evidence="3">
    <location>
        <begin position="804"/>
        <end position="855"/>
    </location>
</feature>
<feature type="compositionally biased region" description="Basic and acidic residues" evidence="3">
    <location>
        <begin position="185"/>
        <end position="200"/>
    </location>
</feature>
<feature type="active site" description="Tele-phosphohistidine intermediate" evidence="7">
    <location>
        <position position="759"/>
    </location>
</feature>
<feature type="modified residue" description="N-acetylthreonine" evidence="8">
    <location>
        <position position="55"/>
    </location>
</feature>
<feature type="sequence conflict" description="In Ref. 1; AAU93516." evidence="6" ref="1">
    <original>C</original>
    <variation>R</variation>
    <location>
        <position position="52"/>
    </location>
</feature>
<feature type="sequence conflict" description="In Ref. 1; AAU93516." evidence="6" ref="1">
    <original>Y</original>
    <variation>C</variation>
    <location>
        <position position="129"/>
    </location>
</feature>
<feature type="sequence conflict" description="In Ref. 5; AAO64153." evidence="6" ref="5">
    <original>K</original>
    <variation>R</variation>
    <location>
        <position position="582"/>
    </location>
</feature>
<feature type="sequence conflict" description="In Ref. 5; AAO64153." evidence="6" ref="5">
    <original>I</original>
    <variation>V</variation>
    <location>
        <position position="1109"/>
    </location>
</feature>
<protein>
    <recommendedName>
        <fullName>Phosphoglucan, water dikinase, chloroplastic</fullName>
        <ecNumber>2.7.9.5</ecNumber>
    </recommendedName>
</protein>
<reference key="1">
    <citation type="journal article" date="2005" name="Plant J.">
        <title>A novel isoform of glucan, water dikinase phosphorylates pre-phosphorylated alpha-glucans and is involved in starch degradation in Arabidopsis.</title>
        <authorList>
            <person name="Baunsgaard L."/>
            <person name="Luetken H."/>
            <person name="Mikkelsen R."/>
            <person name="Glaring M.A."/>
            <person name="Pham T.T."/>
            <person name="Blennow A."/>
        </authorList>
    </citation>
    <scope>NUCLEOTIDE SEQUENCE [MRNA]</scope>
    <scope>FUNCTION</scope>
    <scope>CATALYTIC ACTIVITY</scope>
    <scope>SUBCELLULAR LOCATION</scope>
    <scope>INDUCTION</scope>
    <scope>TISSUE SPECIFICITY</scope>
    <scope>AUTOPHOSPHORYLATION</scope>
    <source>
        <strain>cv. Columbia</strain>
        <tissue>Leaf</tissue>
    </source>
</reference>
<reference key="2">
    <citation type="journal article" date="2005" name="Plant Physiol.">
        <title>Identification of a novel enzyme required for starch metabolism in Arabidopsis leaves. The phosphoglucan, water dikinase.</title>
        <authorList>
            <person name="Koetting O."/>
            <person name="Pusch K."/>
            <person name="Tiessen A."/>
            <person name="Geigenberger P."/>
            <person name="Steup M."/>
            <person name="Ritte G."/>
        </authorList>
    </citation>
    <scope>NUCLEOTIDE SEQUENCE [MRNA]</scope>
    <scope>FUNCTION</scope>
    <scope>CATALYTIC ACTIVITY</scope>
    <scope>SUBCELLULAR LOCATION</scope>
    <scope>ACTIVE SITE HIS-759</scope>
    <source>
        <strain>cv. Columbia</strain>
        <tissue>Leaf</tissue>
    </source>
</reference>
<reference key="3">
    <citation type="journal article" date="2000" name="Nature">
        <title>Sequence and analysis of chromosome 5 of the plant Arabidopsis thaliana.</title>
        <authorList>
            <person name="Tabata S."/>
            <person name="Kaneko T."/>
            <person name="Nakamura Y."/>
            <person name="Kotani H."/>
            <person name="Kato T."/>
            <person name="Asamizu E."/>
            <person name="Miyajima N."/>
            <person name="Sasamoto S."/>
            <person name="Kimura T."/>
            <person name="Hosouchi T."/>
            <person name="Kawashima K."/>
            <person name="Kohara M."/>
            <person name="Matsumoto M."/>
            <person name="Matsuno A."/>
            <person name="Muraki A."/>
            <person name="Nakayama S."/>
            <person name="Nakazaki N."/>
            <person name="Naruo K."/>
            <person name="Okumura S."/>
            <person name="Shinpo S."/>
            <person name="Takeuchi C."/>
            <person name="Wada T."/>
            <person name="Watanabe A."/>
            <person name="Yamada M."/>
            <person name="Yasuda M."/>
            <person name="Sato S."/>
            <person name="de la Bastide M."/>
            <person name="Huang E."/>
            <person name="Spiegel L."/>
            <person name="Gnoj L."/>
            <person name="O'Shaughnessy A."/>
            <person name="Preston R."/>
            <person name="Habermann K."/>
            <person name="Murray J."/>
            <person name="Johnson D."/>
            <person name="Rohlfing T."/>
            <person name="Nelson J."/>
            <person name="Stoneking T."/>
            <person name="Pepin K."/>
            <person name="Spieth J."/>
            <person name="Sekhon M."/>
            <person name="Armstrong J."/>
            <person name="Becker M."/>
            <person name="Belter E."/>
            <person name="Cordum H."/>
            <person name="Cordes M."/>
            <person name="Courtney L."/>
            <person name="Courtney W."/>
            <person name="Dante M."/>
            <person name="Du H."/>
            <person name="Edwards J."/>
            <person name="Fryman J."/>
            <person name="Haakensen B."/>
            <person name="Lamar E."/>
            <person name="Latreille P."/>
            <person name="Leonard S."/>
            <person name="Meyer R."/>
            <person name="Mulvaney E."/>
            <person name="Ozersky P."/>
            <person name="Riley A."/>
            <person name="Strowmatt C."/>
            <person name="Wagner-McPherson C."/>
            <person name="Wollam A."/>
            <person name="Yoakum M."/>
            <person name="Bell M."/>
            <person name="Dedhia N."/>
            <person name="Parnell L."/>
            <person name="Shah R."/>
            <person name="Rodriguez M."/>
            <person name="Hoon See L."/>
            <person name="Vil D."/>
            <person name="Baker J."/>
            <person name="Kirchoff K."/>
            <person name="Toth K."/>
            <person name="King L."/>
            <person name="Bahret A."/>
            <person name="Miller B."/>
            <person name="Marra M.A."/>
            <person name="Martienssen R."/>
            <person name="McCombie W.R."/>
            <person name="Wilson R.K."/>
            <person name="Murphy G."/>
            <person name="Bancroft I."/>
            <person name="Volckaert G."/>
            <person name="Wambutt R."/>
            <person name="Duesterhoeft A."/>
            <person name="Stiekema W."/>
            <person name="Pohl T."/>
            <person name="Entian K.-D."/>
            <person name="Terryn N."/>
            <person name="Hartley N."/>
            <person name="Bent E."/>
            <person name="Johnson S."/>
            <person name="Langham S.-A."/>
            <person name="McCullagh B."/>
            <person name="Robben J."/>
            <person name="Grymonprez B."/>
            <person name="Zimmermann W."/>
            <person name="Ramsperger U."/>
            <person name="Wedler H."/>
            <person name="Balke K."/>
            <person name="Wedler E."/>
            <person name="Peters S."/>
            <person name="van Staveren M."/>
            <person name="Dirkse W."/>
            <person name="Mooijman P."/>
            <person name="Klein Lankhorst R."/>
            <person name="Weitzenegger T."/>
            <person name="Bothe G."/>
            <person name="Rose M."/>
            <person name="Hauf J."/>
            <person name="Berneiser S."/>
            <person name="Hempel S."/>
            <person name="Feldpausch M."/>
            <person name="Lamberth S."/>
            <person name="Villarroel R."/>
            <person name="Gielen J."/>
            <person name="Ardiles W."/>
            <person name="Bents O."/>
            <person name="Lemcke K."/>
            <person name="Kolesov G."/>
            <person name="Mayer K.F.X."/>
            <person name="Rudd S."/>
            <person name="Schoof H."/>
            <person name="Schueller C."/>
            <person name="Zaccaria P."/>
            <person name="Mewes H.-W."/>
            <person name="Bevan M."/>
            <person name="Fransz P.F."/>
        </authorList>
    </citation>
    <scope>NUCLEOTIDE SEQUENCE [LARGE SCALE GENOMIC DNA]</scope>
    <source>
        <strain>cv. Columbia</strain>
    </source>
</reference>
<reference key="4">
    <citation type="journal article" date="2017" name="Plant J.">
        <title>Araport11: a complete reannotation of the Arabidopsis thaliana reference genome.</title>
        <authorList>
            <person name="Cheng C.Y."/>
            <person name="Krishnakumar V."/>
            <person name="Chan A.P."/>
            <person name="Thibaud-Nissen F."/>
            <person name="Schobel S."/>
            <person name="Town C.D."/>
        </authorList>
    </citation>
    <scope>GENOME REANNOTATION</scope>
    <source>
        <strain>cv. Columbia</strain>
    </source>
</reference>
<reference key="5">
    <citation type="journal article" date="2003" name="Science">
        <title>Empirical analysis of transcriptional activity in the Arabidopsis genome.</title>
        <authorList>
            <person name="Yamada K."/>
            <person name="Lim J."/>
            <person name="Dale J.M."/>
            <person name="Chen H."/>
            <person name="Shinn P."/>
            <person name="Palm C.J."/>
            <person name="Southwick A.M."/>
            <person name="Wu H.C."/>
            <person name="Kim C.J."/>
            <person name="Nguyen M."/>
            <person name="Pham P.K."/>
            <person name="Cheuk R.F."/>
            <person name="Karlin-Newmann G."/>
            <person name="Liu S.X."/>
            <person name="Lam B."/>
            <person name="Sakano H."/>
            <person name="Wu T."/>
            <person name="Yu G."/>
            <person name="Miranda M."/>
            <person name="Quach H.L."/>
            <person name="Tripp M."/>
            <person name="Chang C.H."/>
            <person name="Lee J.M."/>
            <person name="Toriumi M.J."/>
            <person name="Chan M.M."/>
            <person name="Tang C.C."/>
            <person name="Onodera C.S."/>
            <person name="Deng J.M."/>
            <person name="Akiyama K."/>
            <person name="Ansari Y."/>
            <person name="Arakawa T."/>
            <person name="Banh J."/>
            <person name="Banno F."/>
            <person name="Bowser L."/>
            <person name="Brooks S.Y."/>
            <person name="Carninci P."/>
            <person name="Chao Q."/>
            <person name="Choy N."/>
            <person name="Enju A."/>
            <person name="Goldsmith A.D."/>
            <person name="Gurjal M."/>
            <person name="Hansen N.F."/>
            <person name="Hayashizaki Y."/>
            <person name="Johnson-Hopson C."/>
            <person name="Hsuan V.W."/>
            <person name="Iida K."/>
            <person name="Karnes M."/>
            <person name="Khan S."/>
            <person name="Koesema E."/>
            <person name="Ishida J."/>
            <person name="Jiang P.X."/>
            <person name="Jones T."/>
            <person name="Kawai J."/>
            <person name="Kamiya A."/>
            <person name="Meyers C."/>
            <person name="Nakajima M."/>
            <person name="Narusaka M."/>
            <person name="Seki M."/>
            <person name="Sakurai T."/>
            <person name="Satou M."/>
            <person name="Tamse R."/>
            <person name="Vaysberg M."/>
            <person name="Wallender E.K."/>
            <person name="Wong C."/>
            <person name="Yamamura Y."/>
            <person name="Yuan S."/>
            <person name="Shinozaki K."/>
            <person name="Davis R.W."/>
            <person name="Theologis A."/>
            <person name="Ecker J.R."/>
        </authorList>
    </citation>
    <scope>NUCLEOTIDE SEQUENCE [LARGE SCALE MRNA] OF 565-1196</scope>
    <source>
        <strain>cv. Columbia</strain>
    </source>
</reference>
<reference key="6">
    <citation type="journal article" date="2012" name="Mol. Cell. Proteomics">
        <title>Comparative large-scale characterisation of plant vs. mammal proteins reveals similar and idiosyncratic N-alpha acetylation features.</title>
        <authorList>
            <person name="Bienvenut W.V."/>
            <person name="Sumpton D."/>
            <person name="Martinez A."/>
            <person name="Lilla S."/>
            <person name="Espagne C."/>
            <person name="Meinnel T."/>
            <person name="Giglione C."/>
        </authorList>
    </citation>
    <scope>ACETYLATION [LARGE SCALE ANALYSIS] AT THR-55</scope>
    <scope>CLEAVAGE OF TRANSIT PEPTIDE [LARGE SCALE ANALYSIS] AFTER ALA-54</scope>
    <scope>IDENTIFICATION BY MASS SPECTROMETRY [LARGE SCALE ANALYSIS]</scope>
</reference>
<evidence type="ECO:0000250" key="1"/>
<evidence type="ECO:0000255" key="2">
    <source>
        <dbReference type="PROSITE-ProRule" id="PRU00594"/>
    </source>
</evidence>
<evidence type="ECO:0000256" key="3">
    <source>
        <dbReference type="SAM" id="MobiDB-lite"/>
    </source>
</evidence>
<evidence type="ECO:0000269" key="4">
    <source>
    </source>
</evidence>
<evidence type="ECO:0000269" key="5">
    <source>
    </source>
</evidence>
<evidence type="ECO:0000305" key="6"/>
<evidence type="ECO:0000305" key="7">
    <source>
    </source>
</evidence>
<evidence type="ECO:0007744" key="8">
    <source>
    </source>
</evidence>
<accession>Q6ZY51</accession>
<accession>O81504</accession>
<accession>O81505</accession>
<accession>Q5XMK9</accession>
<accession>Q84TI8</accession>
<name>PWD_ARATH</name>